<sequence>MSGTKWTEEQLSAITTRDCNLLVAAAAGSGKTAVLVERIIKIITNEENPIDIDKLLVVTFTSAAAAEMRERIANAISKKLDETPTSKNLQKQLTLLNRSNIMTIHSFCLGVIKNNFHKIDLDPSFRICDQTEGILLKMEIIDELFDDKYDEENQEFIKFIEAFSSYKSDNALKELVLSLYNFIMAGPWPKKWLKAASEDFDIKTLQELDESKWVSVLKESIKIELDGYIKMMQKAVELINETDGLEPYFEGFSSELDLIVNAYNNVESSLNDLYNSLNLITFNRLKTIKKNTVSDENIQNLVKQIRDQVKKKISALIEGTFIATPDKMLDNIIKSYPYINQLTELTSEFIDRFNAKKKEKNILDFNDLEHLCLKILIEDNEENQIVPSTIAQKFKDYFEEVLVDEYQDSNNVQEAIIELVSRKNSDNPNVFMVGDVKQSIYKFRQAKPELFIDKYNSYSLDKGINRKIQLYKNFRSREEVINGVNYIFKSVMSKTVGELEYTDVEALNLGASYPKKKNVDDIIGGPIEVHILDRSDNKEENDESKLQAEEEEIGDVNLEARIIVKRINDLISKKDGSKFKVLDKDTGEYRDLKYKDIVILLRATKNWSEVLLDELGLAGIPVYADTGSGYFESIEIRTIMSLLKVIDNPMQDVPMLSLLISPIIGLSAEELTDIRLIDKEKYFYENIIKISTEKLISEELQEKCEYILSSIDKWRRKSIYMPIDEFIWYLYMDTAYYGYVGAMPNGVLRQANLKILFQRARQFSETSFKGLFNFINFINKLTKSSGDMGSAKILGENEDVVRIMSIHKSKGLEFPVVFLAGCGKNFNLMDLNNKILYHEELGLGPEYINLENRTSITTLPKEAIKKRMKLETLSEEMRVLYVAFTRAKEKLIITGAVRNAEKSIEKWINSAVLDKDVILPYEISKGKSYLDWIGMALCKHKDGKILRKKLGFSSEMCKDDLSMWKISIWNKYELDMYDELDENQEELDVKISILDKDVNKKVKSEVYRRLGYEYEFKESTKLTSNISVSDLKRRNMNDNIDTLEIFDLEEEDNKNKDVITPKFLQEKKGISSAERGTAIHFAMKKIDFSKVGTLKEIKEQLNKLYEEEFILQEEYSSINPYKILSFFKSNLGKKMLDVYNKGGKIYREIPFHTEISSLELDESLPQKYANEKIRLQGIIDCFFKCDDEIILLDYKTDYVENEEEFKEKYKSQLLYYSEAVFKMTGKKVNKRYLYSFYLEKEILI</sequence>
<name>ADDA_CLOBA</name>
<gene>
    <name evidence="1" type="primary">addA</name>
    <name type="ordered locus">CLH_0025</name>
</gene>
<feature type="chain" id="PRO_0000379249" description="ATP-dependent helicase/nuclease subunit A">
    <location>
        <begin position="1"/>
        <end position="1244"/>
    </location>
</feature>
<feature type="domain" description="UvrD-like helicase ATP-binding" evidence="1">
    <location>
        <begin position="4"/>
        <end position="477"/>
    </location>
</feature>
<feature type="domain" description="UvrD-like helicase C-terminal" evidence="1">
    <location>
        <begin position="517"/>
        <end position="811"/>
    </location>
</feature>
<feature type="binding site" evidence="1">
    <location>
        <begin position="25"/>
        <end position="32"/>
    </location>
    <ligand>
        <name>ATP</name>
        <dbReference type="ChEBI" id="CHEBI:30616"/>
    </ligand>
</feature>
<protein>
    <recommendedName>
        <fullName evidence="1">ATP-dependent helicase/nuclease subunit A</fullName>
        <ecNumber evidence="1">3.1.-.-</ecNumber>
        <ecNumber evidence="1">5.6.2.4</ecNumber>
    </recommendedName>
    <alternativeName>
        <fullName evidence="1">ATP-dependent helicase/nuclease AddA</fullName>
    </alternativeName>
    <alternativeName>
        <fullName evidence="1">DNA 3'-5' helicase AddA</fullName>
    </alternativeName>
</protein>
<comment type="function">
    <text evidence="1">The heterodimer acts as both an ATP-dependent DNA helicase and an ATP-dependent, dual-direction single-stranded exonuclease. Recognizes the chi site generating a DNA molecule suitable for the initiation of homologous recombination. The AddA nuclease domain is required for chi fragment generation; this subunit has the helicase and 3' -&gt; 5' nuclease activities.</text>
</comment>
<comment type="catalytic activity">
    <reaction evidence="1">
        <text>Couples ATP hydrolysis with the unwinding of duplex DNA by translocating in the 3'-5' direction.</text>
        <dbReference type="EC" id="5.6.2.4"/>
    </reaction>
</comment>
<comment type="catalytic activity">
    <reaction evidence="1">
        <text>ATP + H2O = ADP + phosphate + H(+)</text>
        <dbReference type="Rhea" id="RHEA:13065"/>
        <dbReference type="ChEBI" id="CHEBI:15377"/>
        <dbReference type="ChEBI" id="CHEBI:15378"/>
        <dbReference type="ChEBI" id="CHEBI:30616"/>
        <dbReference type="ChEBI" id="CHEBI:43474"/>
        <dbReference type="ChEBI" id="CHEBI:456216"/>
        <dbReference type="EC" id="5.6.2.4"/>
    </reaction>
</comment>
<comment type="cofactor">
    <cofactor evidence="1">
        <name>Mg(2+)</name>
        <dbReference type="ChEBI" id="CHEBI:18420"/>
    </cofactor>
</comment>
<comment type="subunit">
    <text evidence="1">Heterodimer of AddA and AddB/RexB.</text>
</comment>
<comment type="similarity">
    <text evidence="1">Belongs to the helicase family. AddA subfamily.</text>
</comment>
<organism>
    <name type="scientific">Clostridium botulinum (strain Alaska E43 / Type E3)</name>
    <dbReference type="NCBI Taxonomy" id="508767"/>
    <lineage>
        <taxon>Bacteria</taxon>
        <taxon>Bacillati</taxon>
        <taxon>Bacillota</taxon>
        <taxon>Clostridia</taxon>
        <taxon>Eubacteriales</taxon>
        <taxon>Clostridiaceae</taxon>
        <taxon>Clostridium</taxon>
    </lineage>
</organism>
<accession>B2UX57</accession>
<dbReference type="EC" id="3.1.-.-" evidence="1"/>
<dbReference type="EC" id="5.6.2.4" evidence="1"/>
<dbReference type="EMBL" id="CP001078">
    <property type="protein sequence ID" value="ACD53404.1"/>
    <property type="molecule type" value="Genomic_DNA"/>
</dbReference>
<dbReference type="RefSeq" id="WP_012451314.1">
    <property type="nucleotide sequence ID" value="NC_010723.1"/>
</dbReference>
<dbReference type="SMR" id="B2UX57"/>
<dbReference type="KEGG" id="cbt:CLH_0025"/>
<dbReference type="HOGENOM" id="CLU_001114_3_1_9"/>
<dbReference type="GO" id="GO:0005829">
    <property type="term" value="C:cytosol"/>
    <property type="evidence" value="ECO:0007669"/>
    <property type="project" value="TreeGrafter"/>
</dbReference>
<dbReference type="GO" id="GO:0033202">
    <property type="term" value="C:DNA helicase complex"/>
    <property type="evidence" value="ECO:0007669"/>
    <property type="project" value="TreeGrafter"/>
</dbReference>
<dbReference type="GO" id="GO:0043138">
    <property type="term" value="F:3'-5' DNA helicase activity"/>
    <property type="evidence" value="ECO:0007669"/>
    <property type="project" value="UniProtKB-UniRule"/>
</dbReference>
<dbReference type="GO" id="GO:0008408">
    <property type="term" value="F:3'-5' exonuclease activity"/>
    <property type="evidence" value="ECO:0007669"/>
    <property type="project" value="UniProtKB-UniRule"/>
</dbReference>
<dbReference type="GO" id="GO:0005524">
    <property type="term" value="F:ATP binding"/>
    <property type="evidence" value="ECO:0007669"/>
    <property type="project" value="UniProtKB-UniRule"/>
</dbReference>
<dbReference type="GO" id="GO:0016887">
    <property type="term" value="F:ATP hydrolysis activity"/>
    <property type="evidence" value="ECO:0007669"/>
    <property type="project" value="RHEA"/>
</dbReference>
<dbReference type="GO" id="GO:0003690">
    <property type="term" value="F:double-stranded DNA binding"/>
    <property type="evidence" value="ECO:0007669"/>
    <property type="project" value="UniProtKB-UniRule"/>
</dbReference>
<dbReference type="GO" id="GO:0000724">
    <property type="term" value="P:double-strand break repair via homologous recombination"/>
    <property type="evidence" value="ECO:0007669"/>
    <property type="project" value="UniProtKB-UniRule"/>
</dbReference>
<dbReference type="FunFam" id="3.40.50.300:FF:001236">
    <property type="entry name" value="ATP-dependent helicase/nuclease subunit A"/>
    <property type="match status" value="1"/>
</dbReference>
<dbReference type="Gene3D" id="3.90.320.10">
    <property type="match status" value="1"/>
</dbReference>
<dbReference type="Gene3D" id="3.40.50.300">
    <property type="entry name" value="P-loop containing nucleotide triphosphate hydrolases"/>
    <property type="match status" value="4"/>
</dbReference>
<dbReference type="HAMAP" id="MF_01451">
    <property type="entry name" value="AddA"/>
    <property type="match status" value="1"/>
</dbReference>
<dbReference type="InterPro" id="IPR014152">
    <property type="entry name" value="AddA"/>
</dbReference>
<dbReference type="InterPro" id="IPR014017">
    <property type="entry name" value="DNA_helicase_UvrD-like_C"/>
</dbReference>
<dbReference type="InterPro" id="IPR000212">
    <property type="entry name" value="DNA_helicase_UvrD/REP"/>
</dbReference>
<dbReference type="InterPro" id="IPR027417">
    <property type="entry name" value="P-loop_NTPase"/>
</dbReference>
<dbReference type="InterPro" id="IPR011604">
    <property type="entry name" value="PDDEXK-like_dom_sf"/>
</dbReference>
<dbReference type="InterPro" id="IPR038726">
    <property type="entry name" value="PDDEXK_AddAB-type"/>
</dbReference>
<dbReference type="InterPro" id="IPR011335">
    <property type="entry name" value="Restrct_endonuc-II-like"/>
</dbReference>
<dbReference type="InterPro" id="IPR014016">
    <property type="entry name" value="UvrD-like_ATP-bd"/>
</dbReference>
<dbReference type="NCBIfam" id="TIGR02785">
    <property type="entry name" value="addA_Gpos"/>
    <property type="match status" value="1"/>
</dbReference>
<dbReference type="PANTHER" id="PTHR11070:SF48">
    <property type="entry name" value="ATP-DEPENDENT HELICASE_NUCLEASE SUBUNIT A"/>
    <property type="match status" value="1"/>
</dbReference>
<dbReference type="PANTHER" id="PTHR11070">
    <property type="entry name" value="UVRD / RECB / PCRA DNA HELICASE FAMILY MEMBER"/>
    <property type="match status" value="1"/>
</dbReference>
<dbReference type="Pfam" id="PF12705">
    <property type="entry name" value="PDDEXK_1"/>
    <property type="match status" value="1"/>
</dbReference>
<dbReference type="Pfam" id="PF00580">
    <property type="entry name" value="UvrD-helicase"/>
    <property type="match status" value="1"/>
</dbReference>
<dbReference type="Pfam" id="PF13361">
    <property type="entry name" value="UvrD_C"/>
    <property type="match status" value="1"/>
</dbReference>
<dbReference type="SUPFAM" id="SSF52540">
    <property type="entry name" value="P-loop containing nucleoside triphosphate hydrolases"/>
    <property type="match status" value="1"/>
</dbReference>
<dbReference type="SUPFAM" id="SSF52980">
    <property type="entry name" value="Restriction endonuclease-like"/>
    <property type="match status" value="1"/>
</dbReference>
<dbReference type="PROSITE" id="PS51198">
    <property type="entry name" value="UVRD_HELICASE_ATP_BIND"/>
    <property type="match status" value="1"/>
</dbReference>
<dbReference type="PROSITE" id="PS51217">
    <property type="entry name" value="UVRD_HELICASE_CTER"/>
    <property type="match status" value="1"/>
</dbReference>
<proteinExistence type="inferred from homology"/>
<reference key="1">
    <citation type="submission" date="2008-05" db="EMBL/GenBank/DDBJ databases">
        <title>Complete genome sequence of Clostridium botulinum E3 str. Alaska E43.</title>
        <authorList>
            <person name="Brinkac L.M."/>
            <person name="Brown J.L."/>
            <person name="Bruce D."/>
            <person name="Detter C."/>
            <person name="Munk C."/>
            <person name="Smith L.A."/>
            <person name="Smith T.J."/>
            <person name="Sutton G."/>
            <person name="Brettin T.S."/>
        </authorList>
    </citation>
    <scope>NUCLEOTIDE SEQUENCE [LARGE SCALE GENOMIC DNA]</scope>
    <source>
        <strain>Alaska E43 / Type E3</strain>
    </source>
</reference>
<keyword id="KW-0067">ATP-binding</keyword>
<keyword id="KW-0227">DNA damage</keyword>
<keyword id="KW-0234">DNA repair</keyword>
<keyword id="KW-0238">DNA-binding</keyword>
<keyword id="KW-0269">Exonuclease</keyword>
<keyword id="KW-0347">Helicase</keyword>
<keyword id="KW-0378">Hydrolase</keyword>
<keyword id="KW-0413">Isomerase</keyword>
<keyword id="KW-0540">Nuclease</keyword>
<keyword id="KW-0547">Nucleotide-binding</keyword>
<evidence type="ECO:0000255" key="1">
    <source>
        <dbReference type="HAMAP-Rule" id="MF_01451"/>
    </source>
</evidence>